<organism>
    <name type="scientific">Baumannia cicadellinicola subsp. Homalodisca coagulata</name>
    <dbReference type="NCBI Taxonomy" id="374463"/>
    <lineage>
        <taxon>Bacteria</taxon>
        <taxon>Pseudomonadati</taxon>
        <taxon>Pseudomonadota</taxon>
        <taxon>Gammaproteobacteria</taxon>
        <taxon>Candidatus Palibaumannia</taxon>
    </lineage>
</organism>
<name>RL16_BAUCH</name>
<keyword id="KW-1185">Reference proteome</keyword>
<keyword id="KW-0687">Ribonucleoprotein</keyword>
<keyword id="KW-0689">Ribosomal protein</keyword>
<keyword id="KW-0694">RNA-binding</keyword>
<keyword id="KW-0699">rRNA-binding</keyword>
<keyword id="KW-0820">tRNA-binding</keyword>
<proteinExistence type="inferred from homology"/>
<accession>Q1LTD1</accession>
<evidence type="ECO:0000255" key="1">
    <source>
        <dbReference type="HAMAP-Rule" id="MF_01342"/>
    </source>
</evidence>
<evidence type="ECO:0000305" key="2"/>
<reference key="1">
    <citation type="journal article" date="2006" name="PLoS Biol.">
        <title>Metabolic complementarity and genomics of the dual bacterial symbiosis of sharpshooters.</title>
        <authorList>
            <person name="Wu D."/>
            <person name="Daugherty S.C."/>
            <person name="Van Aken S.E."/>
            <person name="Pai G.H."/>
            <person name="Watkins K.L."/>
            <person name="Khouri H."/>
            <person name="Tallon L.J."/>
            <person name="Zaborsky J.M."/>
            <person name="Dunbar H.E."/>
            <person name="Tran P.L."/>
            <person name="Moran N.A."/>
            <person name="Eisen J.A."/>
        </authorList>
    </citation>
    <scope>NUCLEOTIDE SEQUENCE [LARGE SCALE GENOMIC DNA]</scope>
</reference>
<dbReference type="EMBL" id="CP000238">
    <property type="protein sequence ID" value="ABF14331.1"/>
    <property type="molecule type" value="Genomic_DNA"/>
</dbReference>
<dbReference type="RefSeq" id="WP_011520516.1">
    <property type="nucleotide sequence ID" value="NC_007984.1"/>
</dbReference>
<dbReference type="SMR" id="Q1LTD1"/>
<dbReference type="STRING" id="374463.BCI_0335"/>
<dbReference type="KEGG" id="bci:BCI_0335"/>
<dbReference type="HOGENOM" id="CLU_078858_2_1_6"/>
<dbReference type="OrthoDB" id="9802589at2"/>
<dbReference type="Proteomes" id="UP000002427">
    <property type="component" value="Chromosome"/>
</dbReference>
<dbReference type="GO" id="GO:0022625">
    <property type="term" value="C:cytosolic large ribosomal subunit"/>
    <property type="evidence" value="ECO:0007669"/>
    <property type="project" value="TreeGrafter"/>
</dbReference>
<dbReference type="GO" id="GO:0019843">
    <property type="term" value="F:rRNA binding"/>
    <property type="evidence" value="ECO:0007669"/>
    <property type="project" value="UniProtKB-UniRule"/>
</dbReference>
<dbReference type="GO" id="GO:0003735">
    <property type="term" value="F:structural constituent of ribosome"/>
    <property type="evidence" value="ECO:0007669"/>
    <property type="project" value="InterPro"/>
</dbReference>
<dbReference type="GO" id="GO:0000049">
    <property type="term" value="F:tRNA binding"/>
    <property type="evidence" value="ECO:0007669"/>
    <property type="project" value="UniProtKB-KW"/>
</dbReference>
<dbReference type="GO" id="GO:0006412">
    <property type="term" value="P:translation"/>
    <property type="evidence" value="ECO:0007669"/>
    <property type="project" value="UniProtKB-UniRule"/>
</dbReference>
<dbReference type="CDD" id="cd01433">
    <property type="entry name" value="Ribosomal_L16_L10e"/>
    <property type="match status" value="1"/>
</dbReference>
<dbReference type="FunFam" id="3.90.1170.10:FF:000001">
    <property type="entry name" value="50S ribosomal protein L16"/>
    <property type="match status" value="1"/>
</dbReference>
<dbReference type="Gene3D" id="3.90.1170.10">
    <property type="entry name" value="Ribosomal protein L10e/L16"/>
    <property type="match status" value="1"/>
</dbReference>
<dbReference type="HAMAP" id="MF_01342">
    <property type="entry name" value="Ribosomal_uL16"/>
    <property type="match status" value="1"/>
</dbReference>
<dbReference type="InterPro" id="IPR047873">
    <property type="entry name" value="Ribosomal_uL16"/>
</dbReference>
<dbReference type="InterPro" id="IPR000114">
    <property type="entry name" value="Ribosomal_uL16_bact-type"/>
</dbReference>
<dbReference type="InterPro" id="IPR020798">
    <property type="entry name" value="Ribosomal_uL16_CS"/>
</dbReference>
<dbReference type="InterPro" id="IPR016180">
    <property type="entry name" value="Ribosomal_uL16_dom"/>
</dbReference>
<dbReference type="InterPro" id="IPR036920">
    <property type="entry name" value="Ribosomal_uL16_sf"/>
</dbReference>
<dbReference type="NCBIfam" id="TIGR01164">
    <property type="entry name" value="rplP_bact"/>
    <property type="match status" value="1"/>
</dbReference>
<dbReference type="PANTHER" id="PTHR12220">
    <property type="entry name" value="50S/60S RIBOSOMAL PROTEIN L16"/>
    <property type="match status" value="1"/>
</dbReference>
<dbReference type="PANTHER" id="PTHR12220:SF13">
    <property type="entry name" value="LARGE RIBOSOMAL SUBUNIT PROTEIN UL16M"/>
    <property type="match status" value="1"/>
</dbReference>
<dbReference type="Pfam" id="PF00252">
    <property type="entry name" value="Ribosomal_L16"/>
    <property type="match status" value="1"/>
</dbReference>
<dbReference type="PRINTS" id="PR00060">
    <property type="entry name" value="RIBOSOMALL16"/>
</dbReference>
<dbReference type="SUPFAM" id="SSF54686">
    <property type="entry name" value="Ribosomal protein L16p/L10e"/>
    <property type="match status" value="1"/>
</dbReference>
<dbReference type="PROSITE" id="PS00586">
    <property type="entry name" value="RIBOSOMAL_L16_1"/>
    <property type="match status" value="1"/>
</dbReference>
<dbReference type="PROSITE" id="PS00701">
    <property type="entry name" value="RIBOSOMAL_L16_2"/>
    <property type="match status" value="1"/>
</dbReference>
<feature type="chain" id="PRO_0000251618" description="Large ribosomal subunit protein uL16">
    <location>
        <begin position="1"/>
        <end position="137"/>
    </location>
</feature>
<comment type="function">
    <text evidence="1">Binds 23S rRNA and is also seen to make contacts with the A and possibly P site tRNAs.</text>
</comment>
<comment type="subunit">
    <text evidence="1">Part of the 50S ribosomal subunit.</text>
</comment>
<comment type="similarity">
    <text evidence="1">Belongs to the universal ribosomal protein uL16 family.</text>
</comment>
<protein>
    <recommendedName>
        <fullName evidence="1">Large ribosomal subunit protein uL16</fullName>
    </recommendedName>
    <alternativeName>
        <fullName evidence="2">50S ribosomal protein L16</fullName>
    </alternativeName>
</protein>
<sequence length="137" mass="15573">MLQPKRTKFRKMQKGRNRGLALDTNVNFGTFGLKAVDRGRLTARQIEAARRTITRAIKRQGKIWIRIFPDKPITEKPLEVRMGKGKGNVENWVALIKPGKILYEIDGVTEELAREALRLAAAKLPMKTTFANKMILS</sequence>
<gene>
    <name evidence="1" type="primary">rplP</name>
    <name type="ordered locus">BCI_0335</name>
</gene>